<protein>
    <recommendedName>
        <fullName evidence="1">Protein Ves</fullName>
    </recommendedName>
</protein>
<comment type="similarity">
    <text evidence="1">Belongs to the Ves family.</text>
</comment>
<comment type="sequence caution" evidence="2">
    <conflict type="erroneous initiation">
        <sequence resource="EMBL-CDS" id="ABU77400"/>
    </conflict>
</comment>
<reference key="1">
    <citation type="journal article" date="2010" name="PLoS ONE">
        <title>Genome sequence of Cronobacter sakazakii BAA-894 and comparative genomic hybridization analysis with other Cronobacter species.</title>
        <authorList>
            <person name="Kucerova E."/>
            <person name="Clifton S.W."/>
            <person name="Xia X.Q."/>
            <person name="Long F."/>
            <person name="Porwollik S."/>
            <person name="Fulton L."/>
            <person name="Fronick C."/>
            <person name="Minx P."/>
            <person name="Kyung K."/>
            <person name="Warren W."/>
            <person name="Fulton R."/>
            <person name="Feng D."/>
            <person name="Wollam A."/>
            <person name="Shah N."/>
            <person name="Bhonagiri V."/>
            <person name="Nash W.E."/>
            <person name="Hallsworth-Pepin K."/>
            <person name="Wilson R.K."/>
            <person name="McClelland M."/>
            <person name="Forsythe S.J."/>
        </authorList>
    </citation>
    <scope>NUCLEOTIDE SEQUENCE [LARGE SCALE GENOMIC DNA]</scope>
    <source>
        <strain>ATCC BAA-894</strain>
    </source>
</reference>
<proteinExistence type="inferred from homology"/>
<dbReference type="EMBL" id="CP000783">
    <property type="protein sequence ID" value="ABU77400.1"/>
    <property type="status" value="ALT_INIT"/>
    <property type="molecule type" value="Genomic_DNA"/>
</dbReference>
<dbReference type="RefSeq" id="WP_014729086.1">
    <property type="nucleotide sequence ID" value="NC_009778.1"/>
</dbReference>
<dbReference type="SMR" id="A7MNV4"/>
<dbReference type="GeneID" id="45715873"/>
<dbReference type="KEGG" id="esa:ESA_02151"/>
<dbReference type="HOGENOM" id="CLU_090931_5_0_6"/>
<dbReference type="Proteomes" id="UP000000260">
    <property type="component" value="Chromosome"/>
</dbReference>
<dbReference type="CDD" id="cd20293">
    <property type="entry name" value="cupin_HutD_N"/>
    <property type="match status" value="1"/>
</dbReference>
<dbReference type="Gene3D" id="2.60.120.10">
    <property type="entry name" value="Jelly Rolls"/>
    <property type="match status" value="1"/>
</dbReference>
<dbReference type="HAMAP" id="MF_01591">
    <property type="entry name" value="Ves"/>
    <property type="match status" value="1"/>
</dbReference>
<dbReference type="InterPro" id="IPR014710">
    <property type="entry name" value="RmlC-like_jellyroll"/>
</dbReference>
<dbReference type="InterPro" id="IPR011051">
    <property type="entry name" value="RmlC_Cupin_sf"/>
</dbReference>
<dbReference type="InterPro" id="IPR010282">
    <property type="entry name" value="Uncharacterised_HutD/Ves"/>
</dbReference>
<dbReference type="InterPro" id="IPR023482">
    <property type="entry name" value="Uncharacterised_Ves"/>
</dbReference>
<dbReference type="NCBIfam" id="NF008488">
    <property type="entry name" value="PRK11396.1"/>
    <property type="match status" value="1"/>
</dbReference>
<dbReference type="PANTHER" id="PTHR37943">
    <property type="entry name" value="PROTEIN VES"/>
    <property type="match status" value="1"/>
</dbReference>
<dbReference type="PANTHER" id="PTHR37943:SF1">
    <property type="entry name" value="PROTEIN VES"/>
    <property type="match status" value="1"/>
</dbReference>
<dbReference type="Pfam" id="PF05962">
    <property type="entry name" value="HutD"/>
    <property type="match status" value="1"/>
</dbReference>
<dbReference type="SUPFAM" id="SSF51182">
    <property type="entry name" value="RmlC-like cupins"/>
    <property type="match status" value="1"/>
</dbReference>
<name>VES_CROS8</name>
<accession>A7MNV4</accession>
<feature type="chain" id="PRO_0000315002" description="Protein Ves">
    <location>
        <begin position="1"/>
        <end position="181"/>
    </location>
</feature>
<gene>
    <name evidence="1" type="primary">ves</name>
    <name type="ordered locus">ESA_02151</name>
</gene>
<sequence>MEFFDVKKMPVNLWRNGAGETREICCYPPSRDFNWRASIASLASNGEFNVVPQVDRVVTLLDGGEVTLLGGGAFRHTLKRHQPFTFAGEHPVRAELTDGRMSLDFNLMTRRDRCRAQVRVADRTFTTGRARGGIVYVLSGAWQLNDKLLTPEQGAWWQEGSHTLRLLKAEGQVLFSEITYL</sequence>
<keyword id="KW-1185">Reference proteome</keyword>
<organism>
    <name type="scientific">Cronobacter sakazakii (strain ATCC BAA-894)</name>
    <name type="common">Enterobacter sakazakii</name>
    <dbReference type="NCBI Taxonomy" id="290339"/>
    <lineage>
        <taxon>Bacteria</taxon>
        <taxon>Pseudomonadati</taxon>
        <taxon>Pseudomonadota</taxon>
        <taxon>Gammaproteobacteria</taxon>
        <taxon>Enterobacterales</taxon>
        <taxon>Enterobacteriaceae</taxon>
        <taxon>Cronobacter</taxon>
    </lineage>
</organism>
<evidence type="ECO:0000255" key="1">
    <source>
        <dbReference type="HAMAP-Rule" id="MF_01591"/>
    </source>
</evidence>
<evidence type="ECO:0000305" key="2"/>